<protein>
    <recommendedName>
        <fullName evidence="1">DNA-directed RNA polymerase subunit omega</fullName>
        <shortName evidence="1">RNAP omega subunit</shortName>
        <ecNumber evidence="1">2.7.7.6</ecNumber>
    </recommendedName>
    <alternativeName>
        <fullName evidence="1">RNA polymerase omega subunit</fullName>
    </alternativeName>
    <alternativeName>
        <fullName evidence="1">Transcriptase subunit omega</fullName>
    </alternativeName>
</protein>
<gene>
    <name evidence="1" type="primary">rpoZ</name>
    <name type="ordered locus">Ava_2015</name>
</gene>
<feature type="chain" id="PRO_0000237427" description="DNA-directed RNA polymerase subunit omega">
    <location>
        <begin position="1"/>
        <end position="78"/>
    </location>
</feature>
<dbReference type="EC" id="2.7.7.6" evidence="1"/>
<dbReference type="EMBL" id="CP000117">
    <property type="protein sequence ID" value="ABA21637.1"/>
    <property type="molecule type" value="Genomic_DNA"/>
</dbReference>
<dbReference type="SMR" id="Q3MBJ9"/>
<dbReference type="STRING" id="240292.Ava_2015"/>
<dbReference type="KEGG" id="ava:Ava_2015"/>
<dbReference type="eggNOG" id="ENOG5032RMS">
    <property type="taxonomic scope" value="Bacteria"/>
</dbReference>
<dbReference type="HOGENOM" id="CLU_175526_0_0_3"/>
<dbReference type="Proteomes" id="UP000002533">
    <property type="component" value="Chromosome"/>
</dbReference>
<dbReference type="GO" id="GO:0000428">
    <property type="term" value="C:DNA-directed RNA polymerase complex"/>
    <property type="evidence" value="ECO:0007669"/>
    <property type="project" value="UniProtKB-KW"/>
</dbReference>
<dbReference type="GO" id="GO:0003677">
    <property type="term" value="F:DNA binding"/>
    <property type="evidence" value="ECO:0007669"/>
    <property type="project" value="UniProtKB-UniRule"/>
</dbReference>
<dbReference type="GO" id="GO:0003899">
    <property type="term" value="F:DNA-directed RNA polymerase activity"/>
    <property type="evidence" value="ECO:0007669"/>
    <property type="project" value="UniProtKB-UniRule"/>
</dbReference>
<dbReference type="GO" id="GO:0006351">
    <property type="term" value="P:DNA-templated transcription"/>
    <property type="evidence" value="ECO:0007669"/>
    <property type="project" value="UniProtKB-UniRule"/>
</dbReference>
<dbReference type="HAMAP" id="MF_00366">
    <property type="entry name" value="RNApol_bact_RpoZ"/>
    <property type="match status" value="1"/>
</dbReference>
<dbReference type="InterPro" id="IPR003716">
    <property type="entry name" value="DNA-dir_RNA_pol_omega"/>
</dbReference>
<dbReference type="InterPro" id="IPR006110">
    <property type="entry name" value="Pol_omega/Rpo6/RPB6"/>
</dbReference>
<dbReference type="InterPro" id="IPR036161">
    <property type="entry name" value="RPB6/omega-like_sf"/>
</dbReference>
<dbReference type="NCBIfam" id="NF001574">
    <property type="entry name" value="PRK00392.2-5"/>
    <property type="match status" value="1"/>
</dbReference>
<dbReference type="Pfam" id="PF01192">
    <property type="entry name" value="RNA_pol_Rpb6"/>
    <property type="match status" value="1"/>
</dbReference>
<dbReference type="SUPFAM" id="SSF63562">
    <property type="entry name" value="RPB6/omega subunit-like"/>
    <property type="match status" value="1"/>
</dbReference>
<comment type="function">
    <text evidence="1">Promotes RNA polymerase assembly. Latches the N- and C-terminal regions of the beta' subunit thereby facilitating its interaction with the beta and alpha subunits.</text>
</comment>
<comment type="catalytic activity">
    <reaction evidence="1">
        <text>RNA(n) + a ribonucleoside 5'-triphosphate = RNA(n+1) + diphosphate</text>
        <dbReference type="Rhea" id="RHEA:21248"/>
        <dbReference type="Rhea" id="RHEA-COMP:14527"/>
        <dbReference type="Rhea" id="RHEA-COMP:17342"/>
        <dbReference type="ChEBI" id="CHEBI:33019"/>
        <dbReference type="ChEBI" id="CHEBI:61557"/>
        <dbReference type="ChEBI" id="CHEBI:140395"/>
        <dbReference type="EC" id="2.7.7.6"/>
    </reaction>
</comment>
<comment type="subunit">
    <text evidence="1">In cyanobacteria the RNAP catalytic core is composed of 2 alpha, 1 beta, 1 beta', 1 gamma and 1 omega subunit. When a sigma factor is associated with the core the holoenzyme is formed, which can initiate transcription.</text>
</comment>
<comment type="similarity">
    <text evidence="1">Belongs to the RNA polymerase subunit omega family.</text>
</comment>
<name>RPOZ_TRIV2</name>
<reference key="1">
    <citation type="journal article" date="2014" name="Stand. Genomic Sci.">
        <title>Complete genome sequence of Anabaena variabilis ATCC 29413.</title>
        <authorList>
            <person name="Thiel T."/>
            <person name="Pratte B.S."/>
            <person name="Zhong J."/>
            <person name="Goodwin L."/>
            <person name="Copeland A."/>
            <person name="Lucas S."/>
            <person name="Han C."/>
            <person name="Pitluck S."/>
            <person name="Land M.L."/>
            <person name="Kyrpides N.C."/>
            <person name="Woyke T."/>
        </authorList>
    </citation>
    <scope>NUCLEOTIDE SEQUENCE [LARGE SCALE GENOMIC DNA]</scope>
    <source>
        <strain>ATCC 29413 / PCC 7937</strain>
    </source>
</reference>
<keyword id="KW-0240">DNA-directed RNA polymerase</keyword>
<keyword id="KW-0548">Nucleotidyltransferase</keyword>
<keyword id="KW-0804">Transcription</keyword>
<keyword id="KW-0808">Transferase</keyword>
<proteinExistence type="inferred from homology"/>
<organism>
    <name type="scientific">Trichormus variabilis (strain ATCC 29413 / PCC 7937)</name>
    <name type="common">Anabaena variabilis</name>
    <dbReference type="NCBI Taxonomy" id="240292"/>
    <lineage>
        <taxon>Bacteria</taxon>
        <taxon>Bacillati</taxon>
        <taxon>Cyanobacteriota</taxon>
        <taxon>Cyanophyceae</taxon>
        <taxon>Nostocales</taxon>
        <taxon>Nostocaceae</taxon>
        <taxon>Trichormus</taxon>
    </lineage>
</organism>
<accession>Q3MBJ9</accession>
<sequence length="78" mass="9145">MLKRSKFETTQSQIMHRAEDLISAASNRYRITVQVANRAKRRRYEEFESAEDSMMKPVLRAIIEMSDELTQPEIIGEI</sequence>
<evidence type="ECO:0000255" key="1">
    <source>
        <dbReference type="HAMAP-Rule" id="MF_00366"/>
    </source>
</evidence>